<protein>
    <recommendedName>
        <fullName evidence="1">Acetylornithine aminotransferase 1</fullName>
        <shortName evidence="1">ACOAT 1</shortName>
        <ecNumber evidence="1">2.6.1.11</ecNumber>
    </recommendedName>
</protein>
<organism>
    <name type="scientific">Bordetella bronchiseptica (strain ATCC BAA-588 / NCTC 13252 / RB50)</name>
    <name type="common">Alcaligenes bronchisepticus</name>
    <dbReference type="NCBI Taxonomy" id="257310"/>
    <lineage>
        <taxon>Bacteria</taxon>
        <taxon>Pseudomonadati</taxon>
        <taxon>Pseudomonadota</taxon>
        <taxon>Betaproteobacteria</taxon>
        <taxon>Burkholderiales</taxon>
        <taxon>Alcaligenaceae</taxon>
        <taxon>Bordetella</taxon>
    </lineage>
</organism>
<keyword id="KW-0028">Amino-acid biosynthesis</keyword>
<keyword id="KW-0032">Aminotransferase</keyword>
<keyword id="KW-0055">Arginine biosynthesis</keyword>
<keyword id="KW-0963">Cytoplasm</keyword>
<keyword id="KW-0663">Pyridoxal phosphate</keyword>
<keyword id="KW-0808">Transferase</keyword>
<proteinExistence type="inferred from homology"/>
<dbReference type="EC" id="2.6.1.11" evidence="1"/>
<dbReference type="EMBL" id="BX640443">
    <property type="protein sequence ID" value="CAE32485.1"/>
    <property type="molecule type" value="Genomic_DNA"/>
</dbReference>
<dbReference type="RefSeq" id="WP_010926350.1">
    <property type="nucleotide sequence ID" value="NC_002927.3"/>
</dbReference>
<dbReference type="SMR" id="Q7WKW5"/>
<dbReference type="KEGG" id="bbr:BB1988"/>
<dbReference type="eggNOG" id="COG4992">
    <property type="taxonomic scope" value="Bacteria"/>
</dbReference>
<dbReference type="HOGENOM" id="CLU_016922_10_1_4"/>
<dbReference type="UniPathway" id="UPA00068">
    <property type="reaction ID" value="UER00109"/>
</dbReference>
<dbReference type="Proteomes" id="UP000001027">
    <property type="component" value="Chromosome"/>
</dbReference>
<dbReference type="GO" id="GO:0005737">
    <property type="term" value="C:cytoplasm"/>
    <property type="evidence" value="ECO:0007669"/>
    <property type="project" value="UniProtKB-SubCell"/>
</dbReference>
<dbReference type="GO" id="GO:0042802">
    <property type="term" value="F:identical protein binding"/>
    <property type="evidence" value="ECO:0007669"/>
    <property type="project" value="TreeGrafter"/>
</dbReference>
<dbReference type="GO" id="GO:0003992">
    <property type="term" value="F:N2-acetyl-L-ornithine:2-oxoglutarate 5-aminotransferase activity"/>
    <property type="evidence" value="ECO:0007669"/>
    <property type="project" value="UniProtKB-UniRule"/>
</dbReference>
<dbReference type="GO" id="GO:0030170">
    <property type="term" value="F:pyridoxal phosphate binding"/>
    <property type="evidence" value="ECO:0007669"/>
    <property type="project" value="InterPro"/>
</dbReference>
<dbReference type="GO" id="GO:0006526">
    <property type="term" value="P:L-arginine biosynthetic process"/>
    <property type="evidence" value="ECO:0007669"/>
    <property type="project" value="UniProtKB-UniRule"/>
</dbReference>
<dbReference type="CDD" id="cd00610">
    <property type="entry name" value="OAT_like"/>
    <property type="match status" value="1"/>
</dbReference>
<dbReference type="FunFam" id="3.40.640.10:FF:000004">
    <property type="entry name" value="Acetylornithine aminotransferase"/>
    <property type="match status" value="1"/>
</dbReference>
<dbReference type="Gene3D" id="3.90.1150.10">
    <property type="entry name" value="Aspartate Aminotransferase, domain 1"/>
    <property type="match status" value="1"/>
</dbReference>
<dbReference type="Gene3D" id="3.40.640.10">
    <property type="entry name" value="Type I PLP-dependent aspartate aminotransferase-like (Major domain)"/>
    <property type="match status" value="1"/>
</dbReference>
<dbReference type="HAMAP" id="MF_01107">
    <property type="entry name" value="ArgD_aminotrans_3"/>
    <property type="match status" value="1"/>
</dbReference>
<dbReference type="InterPro" id="IPR004636">
    <property type="entry name" value="AcOrn/SuccOrn_fam"/>
</dbReference>
<dbReference type="InterPro" id="IPR005814">
    <property type="entry name" value="Aminotrans_3"/>
</dbReference>
<dbReference type="InterPro" id="IPR049704">
    <property type="entry name" value="Aminotrans_3_PPA_site"/>
</dbReference>
<dbReference type="InterPro" id="IPR050103">
    <property type="entry name" value="Class-III_PLP-dep_AT"/>
</dbReference>
<dbReference type="InterPro" id="IPR015424">
    <property type="entry name" value="PyrdxlP-dep_Trfase"/>
</dbReference>
<dbReference type="InterPro" id="IPR015421">
    <property type="entry name" value="PyrdxlP-dep_Trfase_major"/>
</dbReference>
<dbReference type="InterPro" id="IPR015422">
    <property type="entry name" value="PyrdxlP-dep_Trfase_small"/>
</dbReference>
<dbReference type="NCBIfam" id="TIGR00707">
    <property type="entry name" value="argD"/>
    <property type="match status" value="1"/>
</dbReference>
<dbReference type="NCBIfam" id="NF002325">
    <property type="entry name" value="PRK01278.1"/>
    <property type="match status" value="1"/>
</dbReference>
<dbReference type="PANTHER" id="PTHR11986:SF79">
    <property type="entry name" value="ACETYLORNITHINE AMINOTRANSFERASE, MITOCHONDRIAL"/>
    <property type="match status" value="1"/>
</dbReference>
<dbReference type="PANTHER" id="PTHR11986">
    <property type="entry name" value="AMINOTRANSFERASE CLASS III"/>
    <property type="match status" value="1"/>
</dbReference>
<dbReference type="Pfam" id="PF00202">
    <property type="entry name" value="Aminotran_3"/>
    <property type="match status" value="1"/>
</dbReference>
<dbReference type="PIRSF" id="PIRSF000521">
    <property type="entry name" value="Transaminase_4ab_Lys_Orn"/>
    <property type="match status" value="1"/>
</dbReference>
<dbReference type="SUPFAM" id="SSF53383">
    <property type="entry name" value="PLP-dependent transferases"/>
    <property type="match status" value="1"/>
</dbReference>
<dbReference type="PROSITE" id="PS00600">
    <property type="entry name" value="AA_TRANSFER_CLASS_3"/>
    <property type="match status" value="1"/>
</dbReference>
<name>ARGD1_BORBR</name>
<gene>
    <name evidence="1" type="primary">argD1</name>
    <name type="ordered locus">BB1988</name>
</gene>
<reference key="1">
    <citation type="journal article" date="2003" name="Nat. Genet.">
        <title>Comparative analysis of the genome sequences of Bordetella pertussis, Bordetella parapertussis and Bordetella bronchiseptica.</title>
        <authorList>
            <person name="Parkhill J."/>
            <person name="Sebaihia M."/>
            <person name="Preston A."/>
            <person name="Murphy L.D."/>
            <person name="Thomson N.R."/>
            <person name="Harris D.E."/>
            <person name="Holden M.T.G."/>
            <person name="Churcher C.M."/>
            <person name="Bentley S.D."/>
            <person name="Mungall K.L."/>
            <person name="Cerdeno-Tarraga A.-M."/>
            <person name="Temple L."/>
            <person name="James K.D."/>
            <person name="Harris B."/>
            <person name="Quail M.A."/>
            <person name="Achtman M."/>
            <person name="Atkin R."/>
            <person name="Baker S."/>
            <person name="Basham D."/>
            <person name="Bason N."/>
            <person name="Cherevach I."/>
            <person name="Chillingworth T."/>
            <person name="Collins M."/>
            <person name="Cronin A."/>
            <person name="Davis P."/>
            <person name="Doggett J."/>
            <person name="Feltwell T."/>
            <person name="Goble A."/>
            <person name="Hamlin N."/>
            <person name="Hauser H."/>
            <person name="Holroyd S."/>
            <person name="Jagels K."/>
            <person name="Leather S."/>
            <person name="Moule S."/>
            <person name="Norberczak H."/>
            <person name="O'Neil S."/>
            <person name="Ormond D."/>
            <person name="Price C."/>
            <person name="Rabbinowitsch E."/>
            <person name="Rutter S."/>
            <person name="Sanders M."/>
            <person name="Saunders D."/>
            <person name="Seeger K."/>
            <person name="Sharp S."/>
            <person name="Simmonds M."/>
            <person name="Skelton J."/>
            <person name="Squares R."/>
            <person name="Squares S."/>
            <person name="Stevens K."/>
            <person name="Unwin L."/>
            <person name="Whitehead S."/>
            <person name="Barrell B.G."/>
            <person name="Maskell D.J."/>
        </authorList>
    </citation>
    <scope>NUCLEOTIDE SEQUENCE [LARGE SCALE GENOMIC DNA]</scope>
    <source>
        <strain>ATCC BAA-588 / NCTC 13252 / RB50</strain>
    </source>
</reference>
<comment type="catalytic activity">
    <reaction evidence="1">
        <text>N(2)-acetyl-L-ornithine + 2-oxoglutarate = N-acetyl-L-glutamate 5-semialdehyde + L-glutamate</text>
        <dbReference type="Rhea" id="RHEA:18049"/>
        <dbReference type="ChEBI" id="CHEBI:16810"/>
        <dbReference type="ChEBI" id="CHEBI:29123"/>
        <dbReference type="ChEBI" id="CHEBI:29985"/>
        <dbReference type="ChEBI" id="CHEBI:57805"/>
        <dbReference type="EC" id="2.6.1.11"/>
    </reaction>
</comment>
<comment type="cofactor">
    <cofactor evidence="1">
        <name>pyridoxal 5'-phosphate</name>
        <dbReference type="ChEBI" id="CHEBI:597326"/>
    </cofactor>
    <text evidence="1">Binds 1 pyridoxal phosphate per subunit.</text>
</comment>
<comment type="pathway">
    <text evidence="1">Amino-acid biosynthesis; L-arginine biosynthesis; N(2)-acetyl-L-ornithine from L-glutamate: step 4/4.</text>
</comment>
<comment type="subunit">
    <text evidence="1">Homodimer.</text>
</comment>
<comment type="subcellular location">
    <subcellularLocation>
        <location evidence="1">Cytoplasm</location>
    </subcellularLocation>
</comment>
<comment type="miscellaneous">
    <text evidence="1">May also have succinyldiaminopimelate aminotransferase activity, thus carrying out the corresponding step in lysine biosynthesis.</text>
</comment>
<comment type="similarity">
    <text evidence="1">Belongs to the class-III pyridoxal-phosphate-dependent aminotransferase family. ArgD subfamily.</text>
</comment>
<sequence>MSSALANIYARLPVSFTHGRGVWLWDTGERRYLDALAGIGVSCLGHGHPGLVAAISEQAARLIHTSNIYEVPQQAALARRLAELSGMSEVLFSNSGSEANEAAIKLARYYGYKQGNTHAHIITMDSSWHGRTLATLAATGSDKARQGFGPMPSGFIQVPYNDLPAIRAAGEAEPRVTAVLLEVLQGEGGIRPSDMAFLRGVRQLCTERGWLLMIDEVQSGIGRTGKWFAHQWADIRPDVMTLAKGLAGGVPIGAMLAAGPAAGVFAPGSHGTTFGGGPLACAAGLAVIDAIEQEGLLANAHEVGAHLHAALASELAGVPGIIEVRGRGLMLGIELDRPCGILATRAMEAGLLINVTRERVVRLLPPLILSGEEADQIVRILVPLIKQFLAQQQ</sequence>
<evidence type="ECO:0000255" key="1">
    <source>
        <dbReference type="HAMAP-Rule" id="MF_01107"/>
    </source>
</evidence>
<accession>Q7WKW5</accession>
<feature type="chain" id="PRO_0000112723" description="Acetylornithine aminotransferase 1">
    <location>
        <begin position="1"/>
        <end position="393"/>
    </location>
</feature>
<feature type="binding site" evidence="1">
    <location>
        <position position="131"/>
    </location>
    <ligand>
        <name>N(2)-acetyl-L-ornithine</name>
        <dbReference type="ChEBI" id="CHEBI:57805"/>
    </ligand>
</feature>
<feature type="binding site" evidence="1">
    <location>
        <begin position="215"/>
        <end position="218"/>
    </location>
    <ligand>
        <name>pyridoxal 5'-phosphate</name>
        <dbReference type="ChEBI" id="CHEBI:597326"/>
    </ligand>
</feature>
<feature type="binding site" evidence="1">
    <location>
        <position position="272"/>
    </location>
    <ligand>
        <name>N(2)-acetyl-L-ornithine</name>
        <dbReference type="ChEBI" id="CHEBI:57805"/>
    </ligand>
</feature>
<feature type="binding site" evidence="1">
    <location>
        <position position="273"/>
    </location>
    <ligand>
        <name>pyridoxal 5'-phosphate</name>
        <dbReference type="ChEBI" id="CHEBI:597326"/>
    </ligand>
</feature>
<feature type="modified residue" description="N6-(pyridoxal phosphate)lysine" evidence="1">
    <location>
        <position position="244"/>
    </location>
</feature>